<sequence length="347" mass="39902">MVQYVVEWLPRIQSISVVVEGWKQVEIKNLKDTLMSISGDEEQVEDILLPVEVEEKVDASYKFKNRGKDLEWMTKLRSKSSKIYDSSIMSLPDGRWTKEELRSDSDFSIECLNCKQKIISKDNCQVLNDMPSEFWFELMDYWHCHKPDVKEDKSSYTRFETLKPSKNEILIGSSYFQGTPATFENVATTKENDNVLCIKCSAVLGQVTAGSLYKLHKWKLQLIRSGNTYKFPPECDITISLINVVKANSCRYVLVKCKTESLLVWIFSVDIGVTLTGNKSFKRAMKLLYTNSVTTINRCLNRQVVEELDFQETSFNAFYSALQHTNALLPSSMKKIGEWTISYTSLI</sequence>
<gene>
    <name type="ordered locus">YJR141W</name>
    <name type="ORF">J2166</name>
</gene>
<protein>
    <recommendedName>
        <fullName>Uncharacterized protein YJR141W</fullName>
    </recommendedName>
</protein>
<reference key="1">
    <citation type="journal article" date="1996" name="EMBO J.">
        <title>Complete nucleotide sequence of Saccharomyces cerevisiae chromosome X.</title>
        <authorList>
            <person name="Galibert F."/>
            <person name="Alexandraki D."/>
            <person name="Baur A."/>
            <person name="Boles E."/>
            <person name="Chalwatzis N."/>
            <person name="Chuat J.-C."/>
            <person name="Coster F."/>
            <person name="Cziepluch C."/>
            <person name="de Haan M."/>
            <person name="Domdey H."/>
            <person name="Durand P."/>
            <person name="Entian K.-D."/>
            <person name="Gatius M."/>
            <person name="Goffeau A."/>
            <person name="Grivell L.A."/>
            <person name="Hennemann A."/>
            <person name="Herbert C.J."/>
            <person name="Heumann K."/>
            <person name="Hilger F."/>
            <person name="Hollenberg C.P."/>
            <person name="Huang M.-E."/>
            <person name="Jacq C."/>
            <person name="Jauniaux J.-C."/>
            <person name="Katsoulou C."/>
            <person name="Kirchrath L."/>
            <person name="Kleine K."/>
            <person name="Kordes E."/>
            <person name="Koetter P."/>
            <person name="Liebl S."/>
            <person name="Louis E.J."/>
            <person name="Manus V."/>
            <person name="Mewes H.-W."/>
            <person name="Miosga T."/>
            <person name="Obermaier B."/>
            <person name="Perea J."/>
            <person name="Pohl T.M."/>
            <person name="Portetelle D."/>
            <person name="Pujol A."/>
            <person name="Purnelle B."/>
            <person name="Ramezani Rad M."/>
            <person name="Rasmussen S.W."/>
            <person name="Rose M."/>
            <person name="Rossau R."/>
            <person name="Schaaff-Gerstenschlaeger I."/>
            <person name="Smits P.H.M."/>
            <person name="Scarcez T."/>
            <person name="Soriano N."/>
            <person name="To Van D."/>
            <person name="Tzermia M."/>
            <person name="Van Broekhoven A."/>
            <person name="Vandenbol M."/>
            <person name="Wedler H."/>
            <person name="von Wettstein D."/>
            <person name="Wambutt R."/>
            <person name="Zagulski M."/>
            <person name="Zollner A."/>
            <person name="Karpfinger-Hartl L."/>
        </authorList>
    </citation>
    <scope>NUCLEOTIDE SEQUENCE [LARGE SCALE GENOMIC DNA]</scope>
    <source>
        <strain>ATCC 204508 / S288c</strain>
    </source>
</reference>
<reference key="2">
    <citation type="journal article" date="2014" name="G3 (Bethesda)">
        <title>The reference genome sequence of Saccharomyces cerevisiae: Then and now.</title>
        <authorList>
            <person name="Engel S.R."/>
            <person name="Dietrich F.S."/>
            <person name="Fisk D.G."/>
            <person name="Binkley G."/>
            <person name="Balakrishnan R."/>
            <person name="Costanzo M.C."/>
            <person name="Dwight S.S."/>
            <person name="Hitz B.C."/>
            <person name="Karra K."/>
            <person name="Nash R.S."/>
            <person name="Weng S."/>
            <person name="Wong E.D."/>
            <person name="Lloyd P."/>
            <person name="Skrzypek M.S."/>
            <person name="Miyasato S.R."/>
            <person name="Simison M."/>
            <person name="Cherry J.M."/>
        </authorList>
    </citation>
    <scope>GENOME REANNOTATION</scope>
    <source>
        <strain>ATCC 204508 / S288c</strain>
    </source>
</reference>
<reference key="3">
    <citation type="journal article" date="2007" name="Genome Res.">
        <title>Approaching a complete repository of sequence-verified protein-encoding clones for Saccharomyces cerevisiae.</title>
        <authorList>
            <person name="Hu Y."/>
            <person name="Rolfs A."/>
            <person name="Bhullar B."/>
            <person name="Murthy T.V.S."/>
            <person name="Zhu C."/>
            <person name="Berger M.F."/>
            <person name="Camargo A.A."/>
            <person name="Kelley F."/>
            <person name="McCarron S."/>
            <person name="Jepson D."/>
            <person name="Richardson A."/>
            <person name="Raphael J."/>
            <person name="Moreira D."/>
            <person name="Taycher E."/>
            <person name="Zuo D."/>
            <person name="Mohr S."/>
            <person name="Kane M.F."/>
            <person name="Williamson J."/>
            <person name="Simpson A.J.G."/>
            <person name="Bulyk M.L."/>
            <person name="Harlow E."/>
            <person name="Marsischky G."/>
            <person name="Kolodner R.D."/>
            <person name="LaBaer J."/>
        </authorList>
    </citation>
    <scope>NUCLEOTIDE SEQUENCE [GENOMIC DNA]</scope>
    <source>
        <strain>ATCC 204508 / S288c</strain>
    </source>
</reference>
<proteinExistence type="predicted"/>
<name>YJ9I_YEAST</name>
<dbReference type="EMBL" id="Z49641">
    <property type="protein sequence ID" value="CAA89673.1"/>
    <property type="molecule type" value="Genomic_DNA"/>
</dbReference>
<dbReference type="EMBL" id="AY558090">
    <property type="protein sequence ID" value="AAS56416.1"/>
    <property type="molecule type" value="Genomic_DNA"/>
</dbReference>
<dbReference type="EMBL" id="BK006943">
    <property type="protein sequence ID" value="DAA08926.1"/>
    <property type="molecule type" value="Genomic_DNA"/>
</dbReference>
<dbReference type="PIR" id="S57164">
    <property type="entry name" value="S57164"/>
</dbReference>
<dbReference type="BioGRID" id="33897">
    <property type="interactions" value="339"/>
</dbReference>
<dbReference type="DIP" id="DIP-4477N"/>
<dbReference type="FunCoup" id="P47172">
    <property type="interactions" value="57"/>
</dbReference>
<dbReference type="IntAct" id="P47172">
    <property type="interactions" value="6"/>
</dbReference>
<dbReference type="STRING" id="4932.YJR141W"/>
<dbReference type="PaxDb" id="4932-YJR141W"/>
<dbReference type="PeptideAtlas" id="P47172"/>
<dbReference type="TopDownProteomics" id="P47172"/>
<dbReference type="EnsemblFungi" id="YJR141W_mRNA">
    <property type="protein sequence ID" value="YJR141W"/>
    <property type="gene ID" value="YJR141W"/>
</dbReference>
<dbReference type="KEGG" id="sce:YJR141W"/>
<dbReference type="AGR" id="SGD:S000003902"/>
<dbReference type="SGD" id="S000003902">
    <property type="gene designation" value="YJR141W"/>
</dbReference>
<dbReference type="VEuPathDB" id="FungiDB:YJR141W"/>
<dbReference type="eggNOG" id="KOG4784">
    <property type="taxonomic scope" value="Eukaryota"/>
</dbReference>
<dbReference type="HOGENOM" id="CLU_029122_0_0_1"/>
<dbReference type="InParanoid" id="P47172"/>
<dbReference type="OMA" id="QAMKVFY"/>
<dbReference type="OrthoDB" id="386949at2759"/>
<dbReference type="BioCyc" id="YEAST:G3O-31756-MONOMER"/>
<dbReference type="Reactome" id="R-SCE-983168">
    <property type="pathway name" value="Antigen processing: Ubiquitination &amp; Proteasome degradation"/>
</dbReference>
<dbReference type="BioGRID-ORCS" id="853606">
    <property type="hits" value="4 hits in 10 CRISPR screens"/>
</dbReference>
<dbReference type="PRO" id="PR:P47172"/>
<dbReference type="Proteomes" id="UP000002311">
    <property type="component" value="Chromosome X"/>
</dbReference>
<dbReference type="RNAct" id="P47172">
    <property type="molecule type" value="protein"/>
</dbReference>
<dbReference type="GO" id="GO:0005829">
    <property type="term" value="C:cytosol"/>
    <property type="evidence" value="ECO:0000314"/>
    <property type="project" value="SGD"/>
</dbReference>
<dbReference type="GO" id="GO:0005634">
    <property type="term" value="C:nucleus"/>
    <property type="evidence" value="ECO:0000314"/>
    <property type="project" value="SGD"/>
</dbReference>
<dbReference type="GO" id="GO:0000151">
    <property type="term" value="C:ubiquitin ligase complex"/>
    <property type="evidence" value="ECO:0000318"/>
    <property type="project" value="GO_Central"/>
</dbReference>
<dbReference type="GO" id="GO:0030332">
    <property type="term" value="F:cyclin binding"/>
    <property type="evidence" value="ECO:0000318"/>
    <property type="project" value="GO_Central"/>
</dbReference>
<dbReference type="GO" id="GO:0031624">
    <property type="term" value="F:ubiquitin conjugating enzyme binding"/>
    <property type="evidence" value="ECO:0000353"/>
    <property type="project" value="SGD"/>
</dbReference>
<dbReference type="GO" id="GO:0061630">
    <property type="term" value="F:ubiquitin protein ligase activity"/>
    <property type="evidence" value="ECO:0000318"/>
    <property type="project" value="GO_Central"/>
</dbReference>
<dbReference type="GO" id="GO:0031397">
    <property type="term" value="P:negative regulation of protein ubiquitination"/>
    <property type="evidence" value="ECO:0000315"/>
    <property type="project" value="SGD"/>
</dbReference>
<dbReference type="GO" id="GO:0031442">
    <property type="term" value="P:positive regulation of mRNA 3'-end processing"/>
    <property type="evidence" value="ECO:0000315"/>
    <property type="project" value="SGD"/>
</dbReference>
<dbReference type="GO" id="GO:0043161">
    <property type="term" value="P:proteasome-mediated ubiquitin-dependent protein catabolic process"/>
    <property type="evidence" value="ECO:0000315"/>
    <property type="project" value="SGD"/>
</dbReference>
<dbReference type="GO" id="GO:0051865">
    <property type="term" value="P:protein autoubiquitination"/>
    <property type="evidence" value="ECO:0000318"/>
    <property type="project" value="GO_Central"/>
</dbReference>
<dbReference type="GO" id="GO:0006513">
    <property type="term" value="P:protein monoubiquitination"/>
    <property type="evidence" value="ECO:0000318"/>
    <property type="project" value="GO_Central"/>
</dbReference>
<dbReference type="GO" id="GO:0000209">
    <property type="term" value="P:protein polyubiquitination"/>
    <property type="evidence" value="ECO:0000318"/>
    <property type="project" value="GO_Central"/>
</dbReference>
<dbReference type="InterPro" id="IPR019193">
    <property type="entry name" value="UBQ-conj_enz_E2-bd_prot"/>
</dbReference>
<dbReference type="PANTHER" id="PTHR31531:SF2">
    <property type="entry name" value="E3 UBIQUITIN-PROTEIN LIGASE E3D"/>
    <property type="match status" value="1"/>
</dbReference>
<dbReference type="PANTHER" id="PTHR31531">
    <property type="entry name" value="E3 UBIQUITIN-PROTEIN LIGASE E3D FAMILY MEMBER"/>
    <property type="match status" value="1"/>
</dbReference>
<dbReference type="Pfam" id="PF09814">
    <property type="entry name" value="HECT_2"/>
    <property type="match status" value="1"/>
</dbReference>
<feature type="chain" id="PRO_0000203125" description="Uncharacterized protein YJR141W">
    <location>
        <begin position="1"/>
        <end position="347"/>
    </location>
</feature>
<keyword id="KW-1185">Reference proteome</keyword>
<organism>
    <name type="scientific">Saccharomyces cerevisiae (strain ATCC 204508 / S288c)</name>
    <name type="common">Baker's yeast</name>
    <dbReference type="NCBI Taxonomy" id="559292"/>
    <lineage>
        <taxon>Eukaryota</taxon>
        <taxon>Fungi</taxon>
        <taxon>Dikarya</taxon>
        <taxon>Ascomycota</taxon>
        <taxon>Saccharomycotina</taxon>
        <taxon>Saccharomycetes</taxon>
        <taxon>Saccharomycetales</taxon>
        <taxon>Saccharomycetaceae</taxon>
        <taxon>Saccharomyces</taxon>
    </lineage>
</organism>
<accession>P47172</accession>
<accession>D6VWW0</accession>